<accession>O93225</accession>
<proteinExistence type="inferred from homology"/>
<comment type="function">
    <text evidence="1">Possesses a potent antimicrobial activity against Gram-positive and Gram-negative bacteria. Probably acts by disturbing membrane functions with its amphipathic structure (By similarity).</text>
</comment>
<comment type="subcellular location">
    <subcellularLocation>
        <location evidence="6">Secreted</location>
    </subcellularLocation>
</comment>
<comment type="tissue specificity">
    <text evidence="6">Expressed by the skin glands.</text>
</comment>
<comment type="similarity">
    <text evidence="5">Belongs to the frog skin active peptide (FSAP) family.</text>
</comment>
<comment type="online information" name="The antimicrobial peptide database">
    <link uri="https://wangapd3.com/database/query_output.php?ID=1384"/>
</comment>
<keyword id="KW-0878">Amphibian defense peptide</keyword>
<keyword id="KW-0044">Antibiotic</keyword>
<keyword id="KW-0929">Antimicrobial</keyword>
<keyword id="KW-0165">Cleavage on pair of basic residues</keyword>
<keyword id="KW-0964">Secreted</keyword>
<keyword id="KW-0732">Signal</keyword>
<protein>
    <recommendedName>
        <fullName evidence="4">Dermaseptin AA-3-4</fullName>
    </recommendedName>
</protein>
<evidence type="ECO:0000250" key="1"/>
<evidence type="ECO:0000255" key="2"/>
<evidence type="ECO:0000256" key="3">
    <source>
        <dbReference type="SAM" id="MobiDB-lite"/>
    </source>
</evidence>
<evidence type="ECO:0000303" key="4">
    <source>
    </source>
</evidence>
<evidence type="ECO:0000305" key="5"/>
<evidence type="ECO:0000305" key="6">
    <source>
    </source>
</evidence>
<dbReference type="EMBL" id="AJ005187">
    <property type="protein sequence ID" value="CAA06424.1"/>
    <property type="molecule type" value="mRNA"/>
</dbReference>
<dbReference type="GO" id="GO:0005576">
    <property type="term" value="C:extracellular region"/>
    <property type="evidence" value="ECO:0007669"/>
    <property type="project" value="UniProtKB-SubCell"/>
</dbReference>
<dbReference type="GO" id="GO:0042742">
    <property type="term" value="P:defense response to bacterium"/>
    <property type="evidence" value="ECO:0007669"/>
    <property type="project" value="UniProtKB-KW"/>
</dbReference>
<dbReference type="InterPro" id="IPR004275">
    <property type="entry name" value="Frog_antimicrobial_propeptide"/>
</dbReference>
<dbReference type="InterPro" id="IPR016322">
    <property type="entry name" value="FSAP"/>
</dbReference>
<dbReference type="Pfam" id="PF03032">
    <property type="entry name" value="FSAP_sig_propep"/>
    <property type="match status" value="1"/>
</dbReference>
<dbReference type="PIRSF" id="PIRSF001822">
    <property type="entry name" value="Dermaseptin_precursor"/>
    <property type="match status" value="1"/>
</dbReference>
<name>DRU_AGAAN</name>
<sequence length="72" mass="8163">MAFLKKSLFLVLFLGLVSLSICDEEKRENEDEEEQEDDEQSEEKRGMWGSLLKGVATVVKHVLPHALSSQQS</sequence>
<reference key="1">
    <citation type="journal article" date="1998" name="Biochim. Biophys. Acta">
        <title>Cloning of cDNAs encoding new peptides of the dermaseptin-family.</title>
        <authorList>
            <person name="Wechselberger C."/>
        </authorList>
    </citation>
    <scope>NUCLEOTIDE SEQUENCE [MRNA]</scope>
    <source>
        <tissue>Skin</tissue>
    </source>
</reference>
<feature type="signal peptide" evidence="2">
    <location>
        <begin position="1"/>
        <end position="22"/>
    </location>
</feature>
<feature type="propeptide" id="PRO_0000007071" evidence="5">
    <location>
        <begin position="23"/>
        <end position="43"/>
    </location>
</feature>
<feature type="peptide" id="PRO_0000007072" description="Dermaseptin AA-3-4" evidence="6">
    <location>
        <begin position="46"/>
        <end position="72"/>
    </location>
</feature>
<feature type="region of interest" description="Disordered" evidence="3">
    <location>
        <begin position="24"/>
        <end position="45"/>
    </location>
</feature>
<feature type="compositionally biased region" description="Acidic residues" evidence="3">
    <location>
        <begin position="30"/>
        <end position="41"/>
    </location>
</feature>
<organism>
    <name type="scientific">Agalychnis annae</name>
    <name type="common">Blue-sided leaf frog</name>
    <name type="synonym">Phyllomedusa annae</name>
    <dbReference type="NCBI Taxonomy" id="75990"/>
    <lineage>
        <taxon>Eukaryota</taxon>
        <taxon>Metazoa</taxon>
        <taxon>Chordata</taxon>
        <taxon>Craniata</taxon>
        <taxon>Vertebrata</taxon>
        <taxon>Euteleostomi</taxon>
        <taxon>Amphibia</taxon>
        <taxon>Batrachia</taxon>
        <taxon>Anura</taxon>
        <taxon>Neobatrachia</taxon>
        <taxon>Hyloidea</taxon>
        <taxon>Hylidae</taxon>
        <taxon>Phyllomedusinae</taxon>
        <taxon>Agalychnis</taxon>
    </lineage>
</organism>